<keyword id="KW-0663">Pyridoxal phosphate</keyword>
<keyword id="KW-1185">Reference proteome</keyword>
<name>PLPHP_MYCTO</name>
<protein>
    <recommendedName>
        <fullName evidence="1">Pyridoxal phosphate homeostasis protein</fullName>
        <shortName evidence="1">PLP homeostasis protein</shortName>
    </recommendedName>
</protein>
<organism>
    <name type="scientific">Mycobacterium tuberculosis (strain CDC 1551 / Oshkosh)</name>
    <dbReference type="NCBI Taxonomy" id="83331"/>
    <lineage>
        <taxon>Bacteria</taxon>
        <taxon>Bacillati</taxon>
        <taxon>Actinomycetota</taxon>
        <taxon>Actinomycetes</taxon>
        <taxon>Mycobacteriales</taxon>
        <taxon>Mycobacteriaceae</taxon>
        <taxon>Mycobacterium</taxon>
        <taxon>Mycobacterium tuberculosis complex</taxon>
    </lineage>
</organism>
<accession>P9WFQ6</accession>
<accession>L0T8S0</accession>
<accession>O06228</accession>
<accession>P67083</accession>
<comment type="function">
    <text evidence="1">Pyridoxal 5'-phosphate (PLP)-binding protein, which is involved in PLP homeostasis.</text>
</comment>
<comment type="similarity">
    <text evidence="1">Belongs to the pyridoxal phosphate-binding protein YggS/PROSC family.</text>
</comment>
<comment type="sequence caution" evidence="2">
    <conflict type="erroneous initiation">
        <sequence resource="EMBL-CDS" id="AAK46491"/>
    </conflict>
</comment>
<dbReference type="EMBL" id="AE000516">
    <property type="protein sequence ID" value="AAK46491.1"/>
    <property type="status" value="ALT_INIT"/>
    <property type="molecule type" value="Genomic_DNA"/>
</dbReference>
<dbReference type="PIR" id="H70578">
    <property type="entry name" value="H70578"/>
</dbReference>
<dbReference type="RefSeq" id="WP_003411137.1">
    <property type="nucleotide sequence ID" value="NZ_KK341227.1"/>
</dbReference>
<dbReference type="SMR" id="P9WFQ6"/>
<dbReference type="KEGG" id="mtc:MT2207"/>
<dbReference type="PATRIC" id="fig|83331.31.peg.2380"/>
<dbReference type="HOGENOM" id="CLU_059988_0_0_11"/>
<dbReference type="Proteomes" id="UP000001020">
    <property type="component" value="Chromosome"/>
</dbReference>
<dbReference type="GO" id="GO:0030170">
    <property type="term" value="F:pyridoxal phosphate binding"/>
    <property type="evidence" value="ECO:0007669"/>
    <property type="project" value="UniProtKB-UniRule"/>
</dbReference>
<dbReference type="Gene3D" id="3.20.20.10">
    <property type="entry name" value="Alanine racemase"/>
    <property type="match status" value="1"/>
</dbReference>
<dbReference type="HAMAP" id="MF_02087">
    <property type="entry name" value="PLP_homeostasis"/>
    <property type="match status" value="1"/>
</dbReference>
<dbReference type="InterPro" id="IPR001608">
    <property type="entry name" value="Ala_racemase_N"/>
</dbReference>
<dbReference type="InterPro" id="IPR029066">
    <property type="entry name" value="PLP-binding_barrel"/>
</dbReference>
<dbReference type="InterPro" id="IPR011078">
    <property type="entry name" value="PyrdxlP_homeostasis"/>
</dbReference>
<dbReference type="NCBIfam" id="TIGR00044">
    <property type="entry name" value="YggS family pyridoxal phosphate-dependent enzyme"/>
    <property type="match status" value="1"/>
</dbReference>
<dbReference type="PANTHER" id="PTHR10146">
    <property type="entry name" value="PROLINE SYNTHETASE CO-TRANSCRIBED BACTERIAL HOMOLOG PROTEIN"/>
    <property type="match status" value="1"/>
</dbReference>
<dbReference type="PANTHER" id="PTHR10146:SF14">
    <property type="entry name" value="PYRIDOXAL PHOSPHATE HOMEOSTASIS PROTEIN"/>
    <property type="match status" value="1"/>
</dbReference>
<dbReference type="Pfam" id="PF01168">
    <property type="entry name" value="Ala_racemase_N"/>
    <property type="match status" value="1"/>
</dbReference>
<dbReference type="PIRSF" id="PIRSF004848">
    <property type="entry name" value="YBL036c_PLPDEIII"/>
    <property type="match status" value="1"/>
</dbReference>
<dbReference type="SUPFAM" id="SSF51419">
    <property type="entry name" value="PLP-binding barrel"/>
    <property type="match status" value="1"/>
</dbReference>
<dbReference type="PROSITE" id="PS01211">
    <property type="entry name" value="UPF0001"/>
    <property type="match status" value="1"/>
</dbReference>
<sequence>MAADLSAYPDRESELTHALAAMRSRLAAAAEAAGRNVGEIELLPITKFFPATDVAILFRLGCRSVGESREQEASAKMAELNRLLAAAELGHSGGVHWHMVGRIQRNKAGSLARWAHTAHSVDSSRLVTALDRAVVAALAEHRRGERLRVYVQVSLDGDGSRGGVDSTTPGAVDRICAQVQESEGLELVGLMGIPPLDWDPDEAFDRLQSEHNRVRAMFPHAIGLSAGMSNDLEVAVKHGSTCVRVGTALLGPRRLRSP</sequence>
<reference key="1">
    <citation type="journal article" date="2002" name="J. Bacteriol.">
        <title>Whole-genome comparison of Mycobacterium tuberculosis clinical and laboratory strains.</title>
        <authorList>
            <person name="Fleischmann R.D."/>
            <person name="Alland D."/>
            <person name="Eisen J.A."/>
            <person name="Carpenter L."/>
            <person name="White O."/>
            <person name="Peterson J.D."/>
            <person name="DeBoy R.T."/>
            <person name="Dodson R.J."/>
            <person name="Gwinn M.L."/>
            <person name="Haft D.H."/>
            <person name="Hickey E.K."/>
            <person name="Kolonay J.F."/>
            <person name="Nelson W.C."/>
            <person name="Umayam L.A."/>
            <person name="Ermolaeva M.D."/>
            <person name="Salzberg S.L."/>
            <person name="Delcher A."/>
            <person name="Utterback T.R."/>
            <person name="Weidman J.F."/>
            <person name="Khouri H.M."/>
            <person name="Gill J."/>
            <person name="Mikula A."/>
            <person name="Bishai W."/>
            <person name="Jacobs W.R. Jr."/>
            <person name="Venter J.C."/>
            <person name="Fraser C.M."/>
        </authorList>
    </citation>
    <scope>NUCLEOTIDE SEQUENCE [LARGE SCALE GENOMIC DNA]</scope>
    <source>
        <strain>CDC 1551 / Oshkosh</strain>
    </source>
</reference>
<proteinExistence type="inferred from homology"/>
<gene>
    <name type="ordered locus">MT2207</name>
</gene>
<evidence type="ECO:0000255" key="1">
    <source>
        <dbReference type="HAMAP-Rule" id="MF_02087"/>
    </source>
</evidence>
<evidence type="ECO:0000305" key="2"/>
<feature type="chain" id="PRO_0000428495" description="Pyridoxal phosphate homeostasis protein">
    <location>
        <begin position="1"/>
        <end position="258"/>
    </location>
</feature>
<feature type="modified residue" description="N6-(pyridoxal phosphate)lysine" evidence="1">
    <location>
        <position position="47"/>
    </location>
</feature>